<feature type="chain" id="PRO_0000340871" description="Gamma-glutamyl phosphate reductase">
    <location>
        <begin position="1"/>
        <end position="419"/>
    </location>
</feature>
<accession>A1KAH8</accession>
<name>PROA_AZOSB</name>
<sequence length="419" mass="44257">MQTVGREARAASRTLAAASTDAKNSALVAMAQAIRDSRDALLAANAADLAEARAAGLDEALIDRLTLSAKGVEGMAAGLEQVAALPDPVGEITDVKRRPSGIQVGKMRVPLGVVGIIYEARPNVTADAAALCLKSGNAAILRGGKEALRSNQAIASCVRTGLAAAGLPQTAVQVLETTDRAAVGALITMPEFVDVIVPRGGKGLIERISSEARVPVIKHLDGNCHVYVDDHADPAKVLPIVENAKTQRYGTCNTTESLLVARAVAPRFLSDIGRMLAARNVEMRACPEALALLREAGIEGARLSPATEQDWHEEYLAPIIAIRVVAGLDEAIAHINTYSSGHTEAILTEHYTHAMRFLREVDSASVMVNASTRFADGFEYGLGAEIGISTDKIHARGPVGLEGLTSQKWIVFGNGEIRR</sequence>
<protein>
    <recommendedName>
        <fullName evidence="1">Gamma-glutamyl phosphate reductase</fullName>
        <shortName evidence="1">GPR</shortName>
        <ecNumber evidence="1">1.2.1.41</ecNumber>
    </recommendedName>
    <alternativeName>
        <fullName evidence="1">Glutamate-5-semialdehyde dehydrogenase</fullName>
    </alternativeName>
    <alternativeName>
        <fullName evidence="1">Glutamyl-gamma-semialdehyde dehydrogenase</fullName>
        <shortName evidence="1">GSA dehydrogenase</shortName>
    </alternativeName>
</protein>
<organism>
    <name type="scientific">Azoarcus sp. (strain BH72)</name>
    <dbReference type="NCBI Taxonomy" id="418699"/>
    <lineage>
        <taxon>Bacteria</taxon>
        <taxon>Pseudomonadati</taxon>
        <taxon>Pseudomonadota</taxon>
        <taxon>Betaproteobacteria</taxon>
        <taxon>Rhodocyclales</taxon>
        <taxon>Zoogloeaceae</taxon>
        <taxon>Azoarcus</taxon>
    </lineage>
</organism>
<proteinExistence type="inferred from homology"/>
<keyword id="KW-0028">Amino-acid biosynthesis</keyword>
<keyword id="KW-0963">Cytoplasm</keyword>
<keyword id="KW-0521">NADP</keyword>
<keyword id="KW-0560">Oxidoreductase</keyword>
<keyword id="KW-0641">Proline biosynthesis</keyword>
<keyword id="KW-1185">Reference proteome</keyword>
<dbReference type="EC" id="1.2.1.41" evidence="1"/>
<dbReference type="EMBL" id="AM406670">
    <property type="protein sequence ID" value="CAL95834.1"/>
    <property type="molecule type" value="Genomic_DNA"/>
</dbReference>
<dbReference type="SMR" id="A1KAH8"/>
<dbReference type="STRING" id="62928.azo3218"/>
<dbReference type="KEGG" id="azo:azo3218"/>
<dbReference type="eggNOG" id="COG0014">
    <property type="taxonomic scope" value="Bacteria"/>
</dbReference>
<dbReference type="HOGENOM" id="CLU_030231_0_0_4"/>
<dbReference type="UniPathway" id="UPA00098">
    <property type="reaction ID" value="UER00360"/>
</dbReference>
<dbReference type="Proteomes" id="UP000002588">
    <property type="component" value="Chromosome"/>
</dbReference>
<dbReference type="GO" id="GO:0005737">
    <property type="term" value="C:cytoplasm"/>
    <property type="evidence" value="ECO:0007669"/>
    <property type="project" value="UniProtKB-SubCell"/>
</dbReference>
<dbReference type="GO" id="GO:0004350">
    <property type="term" value="F:glutamate-5-semialdehyde dehydrogenase activity"/>
    <property type="evidence" value="ECO:0007669"/>
    <property type="project" value="UniProtKB-UniRule"/>
</dbReference>
<dbReference type="GO" id="GO:0050661">
    <property type="term" value="F:NADP binding"/>
    <property type="evidence" value="ECO:0007669"/>
    <property type="project" value="InterPro"/>
</dbReference>
<dbReference type="GO" id="GO:0055129">
    <property type="term" value="P:L-proline biosynthetic process"/>
    <property type="evidence" value="ECO:0007669"/>
    <property type="project" value="UniProtKB-UniRule"/>
</dbReference>
<dbReference type="CDD" id="cd07079">
    <property type="entry name" value="ALDH_F18-19_ProA-GPR"/>
    <property type="match status" value="1"/>
</dbReference>
<dbReference type="FunFam" id="3.40.309.10:FF:000006">
    <property type="entry name" value="Gamma-glutamyl phosphate reductase"/>
    <property type="match status" value="1"/>
</dbReference>
<dbReference type="Gene3D" id="3.40.605.10">
    <property type="entry name" value="Aldehyde Dehydrogenase, Chain A, domain 1"/>
    <property type="match status" value="1"/>
</dbReference>
<dbReference type="Gene3D" id="3.40.309.10">
    <property type="entry name" value="Aldehyde Dehydrogenase, Chain A, domain 2"/>
    <property type="match status" value="1"/>
</dbReference>
<dbReference type="HAMAP" id="MF_00412">
    <property type="entry name" value="ProA"/>
    <property type="match status" value="1"/>
</dbReference>
<dbReference type="InterPro" id="IPR016161">
    <property type="entry name" value="Ald_DH/histidinol_DH"/>
</dbReference>
<dbReference type="InterPro" id="IPR016163">
    <property type="entry name" value="Ald_DH_C"/>
</dbReference>
<dbReference type="InterPro" id="IPR016162">
    <property type="entry name" value="Ald_DH_N"/>
</dbReference>
<dbReference type="InterPro" id="IPR015590">
    <property type="entry name" value="Aldehyde_DH_dom"/>
</dbReference>
<dbReference type="InterPro" id="IPR020593">
    <property type="entry name" value="G-glutamylP_reductase_CS"/>
</dbReference>
<dbReference type="InterPro" id="IPR012134">
    <property type="entry name" value="Glu-5-SA_DH"/>
</dbReference>
<dbReference type="InterPro" id="IPR000965">
    <property type="entry name" value="GPR_dom"/>
</dbReference>
<dbReference type="NCBIfam" id="NF001221">
    <property type="entry name" value="PRK00197.1"/>
    <property type="match status" value="1"/>
</dbReference>
<dbReference type="NCBIfam" id="TIGR00407">
    <property type="entry name" value="proA"/>
    <property type="match status" value="1"/>
</dbReference>
<dbReference type="PANTHER" id="PTHR11063:SF8">
    <property type="entry name" value="DELTA-1-PYRROLINE-5-CARBOXYLATE SYNTHASE"/>
    <property type="match status" value="1"/>
</dbReference>
<dbReference type="PANTHER" id="PTHR11063">
    <property type="entry name" value="GLUTAMATE SEMIALDEHYDE DEHYDROGENASE"/>
    <property type="match status" value="1"/>
</dbReference>
<dbReference type="Pfam" id="PF00171">
    <property type="entry name" value="Aldedh"/>
    <property type="match status" value="2"/>
</dbReference>
<dbReference type="PIRSF" id="PIRSF000151">
    <property type="entry name" value="GPR"/>
    <property type="match status" value="1"/>
</dbReference>
<dbReference type="SUPFAM" id="SSF53720">
    <property type="entry name" value="ALDH-like"/>
    <property type="match status" value="1"/>
</dbReference>
<dbReference type="PROSITE" id="PS01223">
    <property type="entry name" value="PROA"/>
    <property type="match status" value="1"/>
</dbReference>
<reference key="1">
    <citation type="journal article" date="2006" name="Nat. Biotechnol.">
        <title>Complete genome of the mutualistic, N2-fixing grass endophyte Azoarcus sp. strain BH72.</title>
        <authorList>
            <person name="Krause A."/>
            <person name="Ramakumar A."/>
            <person name="Bartels D."/>
            <person name="Battistoni F."/>
            <person name="Bekel T."/>
            <person name="Boch J."/>
            <person name="Boehm M."/>
            <person name="Friedrich F."/>
            <person name="Hurek T."/>
            <person name="Krause L."/>
            <person name="Linke B."/>
            <person name="McHardy A.C."/>
            <person name="Sarkar A."/>
            <person name="Schneiker S."/>
            <person name="Syed A.A."/>
            <person name="Thauer R."/>
            <person name="Vorhoelter F.-J."/>
            <person name="Weidner S."/>
            <person name="Puehler A."/>
            <person name="Reinhold-Hurek B."/>
            <person name="Kaiser O."/>
            <person name="Goesmann A."/>
        </authorList>
    </citation>
    <scope>NUCLEOTIDE SEQUENCE [LARGE SCALE GENOMIC DNA]</scope>
    <source>
        <strain>BH72</strain>
    </source>
</reference>
<comment type="function">
    <text evidence="1">Catalyzes the NADPH-dependent reduction of L-glutamate 5-phosphate into L-glutamate 5-semialdehyde and phosphate. The product spontaneously undergoes cyclization to form 1-pyrroline-5-carboxylate.</text>
</comment>
<comment type="catalytic activity">
    <reaction evidence="1">
        <text>L-glutamate 5-semialdehyde + phosphate + NADP(+) = L-glutamyl 5-phosphate + NADPH + H(+)</text>
        <dbReference type="Rhea" id="RHEA:19541"/>
        <dbReference type="ChEBI" id="CHEBI:15378"/>
        <dbReference type="ChEBI" id="CHEBI:43474"/>
        <dbReference type="ChEBI" id="CHEBI:57783"/>
        <dbReference type="ChEBI" id="CHEBI:58066"/>
        <dbReference type="ChEBI" id="CHEBI:58274"/>
        <dbReference type="ChEBI" id="CHEBI:58349"/>
        <dbReference type="EC" id="1.2.1.41"/>
    </reaction>
</comment>
<comment type="pathway">
    <text evidence="1">Amino-acid biosynthesis; L-proline biosynthesis; L-glutamate 5-semialdehyde from L-glutamate: step 2/2.</text>
</comment>
<comment type="subcellular location">
    <subcellularLocation>
        <location evidence="1">Cytoplasm</location>
    </subcellularLocation>
</comment>
<comment type="similarity">
    <text evidence="1">Belongs to the gamma-glutamyl phosphate reductase family.</text>
</comment>
<gene>
    <name evidence="1" type="primary">proA</name>
    <name type="ordered locus">azo3218</name>
</gene>
<evidence type="ECO:0000255" key="1">
    <source>
        <dbReference type="HAMAP-Rule" id="MF_00412"/>
    </source>
</evidence>